<dbReference type="EC" id="1.18.6.1"/>
<dbReference type="EMBL" id="X57006">
    <property type="protein sequence ID" value="CAA40327.1"/>
    <property type="molecule type" value="Genomic_DNA"/>
</dbReference>
<dbReference type="PIR" id="S26191">
    <property type="entry name" value="S26191"/>
</dbReference>
<dbReference type="SMR" id="Q02452"/>
<dbReference type="GO" id="GO:0016612">
    <property type="term" value="C:molybdenum-iron nitrogenase complex"/>
    <property type="evidence" value="ECO:0007669"/>
    <property type="project" value="InterPro"/>
</dbReference>
<dbReference type="GO" id="GO:0005524">
    <property type="term" value="F:ATP binding"/>
    <property type="evidence" value="ECO:0007669"/>
    <property type="project" value="UniProtKB-KW"/>
</dbReference>
<dbReference type="GO" id="GO:0051536">
    <property type="term" value="F:iron-sulfur cluster binding"/>
    <property type="evidence" value="ECO:0007669"/>
    <property type="project" value="UniProtKB-KW"/>
</dbReference>
<dbReference type="GO" id="GO:0046872">
    <property type="term" value="F:metal ion binding"/>
    <property type="evidence" value="ECO:0007669"/>
    <property type="project" value="UniProtKB-KW"/>
</dbReference>
<dbReference type="GO" id="GO:0016163">
    <property type="term" value="F:nitrogenase activity"/>
    <property type="evidence" value="ECO:0007669"/>
    <property type="project" value="UniProtKB-EC"/>
</dbReference>
<dbReference type="GO" id="GO:0009399">
    <property type="term" value="P:nitrogen fixation"/>
    <property type="evidence" value="ECO:0007669"/>
    <property type="project" value="UniProtKB-KW"/>
</dbReference>
<dbReference type="CDD" id="cd01976">
    <property type="entry name" value="Nitrogenase_MoFe_alpha"/>
    <property type="match status" value="1"/>
</dbReference>
<dbReference type="Gene3D" id="3.40.50.1980">
    <property type="entry name" value="Nitrogenase molybdenum iron protein domain"/>
    <property type="match status" value="3"/>
</dbReference>
<dbReference type="InterPro" id="IPR000510">
    <property type="entry name" value="Nase/OxRdtase_comp1"/>
</dbReference>
<dbReference type="InterPro" id="IPR010143">
    <property type="entry name" value="Nase_comp1_asu"/>
</dbReference>
<dbReference type="InterPro" id="IPR000318">
    <property type="entry name" value="Nase_comp1_CS"/>
</dbReference>
<dbReference type="InterPro" id="IPR005972">
    <property type="entry name" value="Nase_Mo-Fe_asu"/>
</dbReference>
<dbReference type="NCBIfam" id="TIGR01862">
    <property type="entry name" value="N2-ase-Ialpha"/>
    <property type="match status" value="1"/>
</dbReference>
<dbReference type="NCBIfam" id="TIGR01282">
    <property type="entry name" value="nifD"/>
    <property type="match status" value="1"/>
</dbReference>
<dbReference type="PANTHER" id="PTHR43457">
    <property type="entry name" value="NITROGENASE MOLYBDENUM-IRON PROTEIN ALPHA CHAIN"/>
    <property type="match status" value="1"/>
</dbReference>
<dbReference type="PANTHER" id="PTHR43457:SF1">
    <property type="entry name" value="NITROGENASE MOLYBDENUM-IRON PROTEIN ALPHA CHAIN"/>
    <property type="match status" value="1"/>
</dbReference>
<dbReference type="Pfam" id="PF00148">
    <property type="entry name" value="Oxidored_nitro"/>
    <property type="match status" value="1"/>
</dbReference>
<dbReference type="SUPFAM" id="SSF53807">
    <property type="entry name" value="Helical backbone' metal receptor"/>
    <property type="match status" value="1"/>
</dbReference>
<dbReference type="PROSITE" id="PS00699">
    <property type="entry name" value="NITROGENASE_1_1"/>
    <property type="match status" value="1"/>
</dbReference>
<dbReference type="PROSITE" id="PS00090">
    <property type="entry name" value="NITROGENASE_1_2"/>
    <property type="match status" value="1"/>
</dbReference>
<keyword id="KW-0067">ATP-binding</keyword>
<keyword id="KW-0408">Iron</keyword>
<keyword id="KW-0411">Iron-sulfur</keyword>
<keyword id="KW-0479">Metal-binding</keyword>
<keyword id="KW-0500">Molybdenum</keyword>
<keyword id="KW-0535">Nitrogen fixation</keyword>
<keyword id="KW-0547">Nucleotide-binding</keyword>
<keyword id="KW-0560">Oxidoreductase</keyword>
<protein>
    <recommendedName>
        <fullName>Nitrogenase molybdenum-iron protein alpha chain</fullName>
        <ecNumber>1.18.6.1</ecNumber>
    </recommendedName>
    <alternativeName>
        <fullName>Dinitrogenase</fullName>
    </alternativeName>
    <alternativeName>
        <fullName>Nitrogenase component I</fullName>
    </alternativeName>
</protein>
<organism>
    <name type="scientific">Frankia alni</name>
    <dbReference type="NCBI Taxonomy" id="1859"/>
    <lineage>
        <taxon>Bacteria</taxon>
        <taxon>Bacillati</taxon>
        <taxon>Actinomycetota</taxon>
        <taxon>Actinomycetes</taxon>
        <taxon>Frankiales</taxon>
        <taxon>Frankiaceae</taxon>
        <taxon>Frankia</taxon>
    </lineage>
</organism>
<reference key="1">
    <citation type="journal article" date="1992" name="Mol. Biol. Evol.">
        <title>Nucleotide sequence of nifD from Frankia alni strain ArI3: phylogenetic inferences.</title>
        <authorList>
            <person name="Normand P."/>
            <person name="Gouy M."/>
            <person name="Cournoyer B."/>
            <person name="Simonet P."/>
        </authorList>
    </citation>
    <scope>NUCLEOTIDE SEQUENCE [GENOMIC DNA]</scope>
    <source>
        <strain>ARI3</strain>
    </source>
</reference>
<comment type="function">
    <text>This molybdenum-iron protein is part of the nitrogenase complex that catalyzes the key enzymatic reactions in nitrogen fixation.</text>
</comment>
<comment type="catalytic activity">
    <reaction>
        <text>N2 + 8 reduced [2Fe-2S]-[ferredoxin] + 16 ATP + 16 H2O = H2 + 8 oxidized [2Fe-2S]-[ferredoxin] + 2 NH4(+) + 16 ADP + 16 phosphate + 6 H(+)</text>
        <dbReference type="Rhea" id="RHEA:21448"/>
        <dbReference type="Rhea" id="RHEA-COMP:10000"/>
        <dbReference type="Rhea" id="RHEA-COMP:10001"/>
        <dbReference type="ChEBI" id="CHEBI:15377"/>
        <dbReference type="ChEBI" id="CHEBI:15378"/>
        <dbReference type="ChEBI" id="CHEBI:17997"/>
        <dbReference type="ChEBI" id="CHEBI:18276"/>
        <dbReference type="ChEBI" id="CHEBI:28938"/>
        <dbReference type="ChEBI" id="CHEBI:30616"/>
        <dbReference type="ChEBI" id="CHEBI:33737"/>
        <dbReference type="ChEBI" id="CHEBI:33738"/>
        <dbReference type="ChEBI" id="CHEBI:43474"/>
        <dbReference type="ChEBI" id="CHEBI:456216"/>
        <dbReference type="EC" id="1.18.6.1"/>
    </reaction>
</comment>
<comment type="cofactor">
    <cofactor evidence="1">
        <name>[8Fe-7S] cluster</name>
        <dbReference type="ChEBI" id="CHEBI:21143"/>
    </cofactor>
    <text evidence="1">Binds 1 [8Fe-7S] cluster per heterodimer.</text>
</comment>
<comment type="cofactor">
    <cofactor evidence="1">
        <name>[7Fe-Mo-9S-C-homocitryl] cluster</name>
        <dbReference type="ChEBI" id="CHEBI:30409"/>
    </cofactor>
    <text evidence="1">Binds 1 [7Fe-Mo-9S-C-homocitryl] cluster per subunit.</text>
</comment>
<comment type="subunit">
    <text>Tetramer of two alpha and two beta chains. Forms complex with the iron protein (nitrogenase component 2).</text>
</comment>
<comment type="similarity">
    <text evidence="2">Belongs to the NifD/NifK/NifE/NifN family.</text>
</comment>
<comment type="caution">
    <text evidence="2">This sequence lacks the conserved His that serves as a ligand for the 7Fe-Mo-9S-C-homocitryl cluster.</text>
</comment>
<name>NIFD_FRAAL</name>
<gene>
    <name type="primary">nifD</name>
</gene>
<accession>Q02452</accession>
<sequence>MTTTPAPERAETEAMIAEVLSQYPKKAAKFRAKHLKANDPEGSKECEVKSNIKSRPGVMTIRGCAYAGSKGVVWGPVKDMVTISHGPVGCGQYSWATRRNYAHGHLGVDNFTAMQITTDFQEKDIVFGGDPKLEQGLDEIVELFPLAKGISVQSECPIGLIGDDIEAVARVSSRLDIPVMRVRCEGFRGVSQSLGHHIANDAVRDHVLGTGGDSFEQTDYDVALIGDYNIGGDAWASRRILEEMGLRVIAQWSGDGTINEMASTHLSKLNLIHCYRSMNYICTTMEERFGTPWTEFNFFGPTKIISSMRKIAEFFDDEIKAKNRAAIAGYQRCVDEITKAFRPRLEGKRVMLAVGPAPRHTIGSYEDLGMEVVGTAAEFAHRDDYTGPTACSKEGTGLYDDPSRVFELEEVAKRPDLIGSGPKEKYIFQKMGTPIEPYHGVDGFAIFARDMARHQQPGLDLLEAPWSKAGEVA</sequence>
<proteinExistence type="inferred from homology"/>
<evidence type="ECO:0000250" key="1"/>
<evidence type="ECO:0000305" key="2"/>
<feature type="chain" id="PRO_0000153066" description="Nitrogenase molybdenum-iron protein alpha chain">
    <location>
        <begin position="1"/>
        <end position="473"/>
    </location>
</feature>
<feature type="binding site" evidence="1">
    <location>
        <position position="64"/>
    </location>
    <ligand>
        <name>[8Fe-7S] cluster</name>
        <dbReference type="ChEBI" id="CHEBI:21143"/>
        <note>ligand shared with beta chain</note>
    </ligand>
</feature>
<feature type="binding site" evidence="1">
    <location>
        <position position="90"/>
    </location>
    <ligand>
        <name>[8Fe-7S] cluster</name>
        <dbReference type="ChEBI" id="CHEBI:21143"/>
        <note>ligand shared with beta chain</note>
    </ligand>
</feature>
<feature type="binding site" evidence="1">
    <location>
        <position position="156"/>
    </location>
    <ligand>
        <name>[8Fe-7S] cluster</name>
        <dbReference type="ChEBI" id="CHEBI:21143"/>
        <note>ligand shared with beta chain</note>
    </ligand>
</feature>
<feature type="binding site" evidence="1">
    <location>
        <position position="274"/>
    </location>
    <ligand>
        <name>[7Fe-Mo-9S-C-homocitryl] cluster</name>
        <dbReference type="ChEBI" id="CHEBI:30409"/>
    </ligand>
</feature>